<evidence type="ECO:0000250" key="1"/>
<evidence type="ECO:0000269" key="2">
    <source>
    </source>
</evidence>
<evidence type="ECO:0000305" key="3"/>
<sequence>KESSAEKFLRQHVDSIDSPGNLSPTYCNQMMLRRNMTKGSCKPVNTFVHEPLKDIKAVCFQENVTCKNGNSNCYKSHASLHITDCRTISSSKYPDCAYKTSQEQKHIIVACEGDPFVPVHYDASV</sequence>
<protein>
    <recommendedName>
        <fullName>Ribonuclease pancreatic</fullName>
        <ecNumber>4.6.1.18</ecNumber>
    </recommendedName>
    <alternativeName>
        <fullName>RNase 1</fullName>
    </alternativeName>
    <alternativeName>
        <fullName>RNase A</fullName>
    </alternativeName>
</protein>
<accession>P16414</accession>
<gene>
    <name type="primary">RNASE1</name>
    <name type="synonym">RNS1</name>
</gene>
<organism>
    <name type="scientific">Spalax ehrenbergi</name>
    <name type="common">Middle East blind mole rat</name>
    <name type="synonym">Nannospalax ehrenbergi</name>
    <dbReference type="NCBI Taxonomy" id="30637"/>
    <lineage>
        <taxon>Eukaryota</taxon>
        <taxon>Metazoa</taxon>
        <taxon>Chordata</taxon>
        <taxon>Craniata</taxon>
        <taxon>Vertebrata</taxon>
        <taxon>Euteleostomi</taxon>
        <taxon>Mammalia</taxon>
        <taxon>Eutheria</taxon>
        <taxon>Euarchontoglires</taxon>
        <taxon>Glires</taxon>
        <taxon>Rodentia</taxon>
        <taxon>Myomorpha</taxon>
        <taxon>Muroidea</taxon>
        <taxon>Spalacidae</taxon>
        <taxon>Spalacinae</taxon>
        <taxon>Nannospalax</taxon>
    </lineage>
</organism>
<proteinExistence type="evidence at protein level"/>
<name>RNAS1_SPAEH</name>
<keyword id="KW-0903">Direct protein sequencing</keyword>
<keyword id="KW-1015">Disulfide bond</keyword>
<keyword id="KW-0255">Endonuclease</keyword>
<keyword id="KW-0325">Glycoprotein</keyword>
<keyword id="KW-0378">Hydrolase</keyword>
<keyword id="KW-0456">Lyase</keyword>
<keyword id="KW-0540">Nuclease</keyword>
<keyword id="KW-0964">Secreted</keyword>
<feature type="chain" id="PRO_0000057215" description="Ribonuclease pancreatic">
    <location>
        <begin position="1"/>
        <end position="125"/>
    </location>
</feature>
<feature type="active site" description="Proton acceptor" evidence="1">
    <location>
        <position position="12"/>
    </location>
</feature>
<feature type="active site" description="Proton donor" evidence="1">
    <location>
        <position position="120"/>
    </location>
</feature>
<feature type="binding site" evidence="1">
    <location>
        <position position="7"/>
    </location>
    <ligand>
        <name>substrate</name>
    </ligand>
</feature>
<feature type="binding site" evidence="1">
    <location>
        <position position="10"/>
    </location>
    <ligand>
        <name>substrate</name>
    </ligand>
</feature>
<feature type="binding site" evidence="1">
    <location>
        <begin position="42"/>
        <end position="46"/>
    </location>
    <ligand>
        <name>substrate</name>
    </ligand>
</feature>
<feature type="binding site" evidence="1">
    <location>
        <position position="67"/>
    </location>
    <ligand>
        <name>substrate</name>
    </ligand>
</feature>
<feature type="binding site" evidence="1">
    <location>
        <position position="86"/>
    </location>
    <ligand>
        <name>substrate</name>
    </ligand>
</feature>
<feature type="glycosylation site" description="N-linked (GlcNAc...) asparagine" evidence="2">
    <location>
        <position position="35"/>
    </location>
</feature>
<feature type="disulfide bond" evidence="1">
    <location>
        <begin position="27"/>
        <end position="85"/>
    </location>
</feature>
<feature type="disulfide bond" evidence="1">
    <location>
        <begin position="41"/>
        <end position="96"/>
    </location>
</feature>
<feature type="disulfide bond" evidence="1">
    <location>
        <begin position="59"/>
        <end position="111"/>
    </location>
</feature>
<feature type="disulfide bond" evidence="1">
    <location>
        <begin position="66"/>
        <end position="73"/>
    </location>
</feature>
<dbReference type="EC" id="4.6.1.18"/>
<dbReference type="PIR" id="S04503">
    <property type="entry name" value="S04503"/>
</dbReference>
<dbReference type="SMR" id="P16414"/>
<dbReference type="GlyCosmos" id="P16414">
    <property type="glycosylation" value="1 site, No reported glycans"/>
</dbReference>
<dbReference type="iPTMnet" id="P16414"/>
<dbReference type="GO" id="GO:0005576">
    <property type="term" value="C:extracellular region"/>
    <property type="evidence" value="ECO:0007669"/>
    <property type="project" value="UniProtKB-SubCell"/>
</dbReference>
<dbReference type="GO" id="GO:0016829">
    <property type="term" value="F:lyase activity"/>
    <property type="evidence" value="ECO:0007669"/>
    <property type="project" value="UniProtKB-KW"/>
</dbReference>
<dbReference type="GO" id="GO:0003676">
    <property type="term" value="F:nucleic acid binding"/>
    <property type="evidence" value="ECO:0007669"/>
    <property type="project" value="InterPro"/>
</dbReference>
<dbReference type="GO" id="GO:0004522">
    <property type="term" value="F:ribonuclease A activity"/>
    <property type="evidence" value="ECO:0007669"/>
    <property type="project" value="UniProtKB-EC"/>
</dbReference>
<dbReference type="GO" id="GO:0050830">
    <property type="term" value="P:defense response to Gram-positive bacterium"/>
    <property type="evidence" value="ECO:0007669"/>
    <property type="project" value="TreeGrafter"/>
</dbReference>
<dbReference type="CDD" id="cd06265">
    <property type="entry name" value="RNase_A_canonical"/>
    <property type="match status" value="1"/>
</dbReference>
<dbReference type="FunFam" id="3.10.130.10:FF:000001">
    <property type="entry name" value="Ribonuclease pancreatic"/>
    <property type="match status" value="1"/>
</dbReference>
<dbReference type="Gene3D" id="3.10.130.10">
    <property type="entry name" value="Ribonuclease A-like domain"/>
    <property type="match status" value="1"/>
</dbReference>
<dbReference type="InterPro" id="IPR001427">
    <property type="entry name" value="RNaseA"/>
</dbReference>
<dbReference type="InterPro" id="IPR036816">
    <property type="entry name" value="RNaseA-like_dom_sf"/>
</dbReference>
<dbReference type="InterPro" id="IPR023411">
    <property type="entry name" value="RNaseA_AS"/>
</dbReference>
<dbReference type="InterPro" id="IPR023412">
    <property type="entry name" value="RNaseA_domain"/>
</dbReference>
<dbReference type="PANTHER" id="PTHR11437">
    <property type="entry name" value="RIBONUCLEASE"/>
    <property type="match status" value="1"/>
</dbReference>
<dbReference type="PANTHER" id="PTHR11437:SF24">
    <property type="entry name" value="RIBONUCLEASE PANCREATIC"/>
    <property type="match status" value="1"/>
</dbReference>
<dbReference type="Pfam" id="PF00074">
    <property type="entry name" value="RnaseA"/>
    <property type="match status" value="1"/>
</dbReference>
<dbReference type="PRINTS" id="PR00794">
    <property type="entry name" value="RIBONUCLEASE"/>
</dbReference>
<dbReference type="SMART" id="SM00092">
    <property type="entry name" value="RNAse_Pc"/>
    <property type="match status" value="1"/>
</dbReference>
<dbReference type="SUPFAM" id="SSF54076">
    <property type="entry name" value="RNase A-like"/>
    <property type="match status" value="1"/>
</dbReference>
<dbReference type="PROSITE" id="PS00127">
    <property type="entry name" value="RNASE_PANCREATIC"/>
    <property type="match status" value="1"/>
</dbReference>
<reference key="1">
    <citation type="journal article" date="1989" name="Biol. Chem. Hoppe-Seyler">
        <title>The amino-acid sequence of pancreatic ribonuclease from the mole rat Spalax ehrenbergi, chromosomal species 2n = 60.</title>
        <authorList>
            <person name="Schueller C."/>
            <person name="Neuteboom B."/>
            <person name="Wuebbels G."/>
            <person name="Beintema J.J."/>
            <person name="Nevo E."/>
        </authorList>
    </citation>
    <scope>PROTEIN SEQUENCE</scope>
    <scope>GLYCOSYLATION AT ASN-35</scope>
    <source>
        <tissue>Pancreas</tissue>
    </source>
</reference>
<comment type="function">
    <text evidence="1">Endonuclease that catalyzes the cleavage of RNA on the 3' side of pyrimidine nucleotides. Acts on single-stranded and double-stranded RNA (By similarity).</text>
</comment>
<comment type="catalytic activity">
    <reaction>
        <text>an [RNA] containing cytidine + H2O = an [RNA]-3'-cytidine-3'-phosphate + a 5'-hydroxy-ribonucleotide-3'-[RNA].</text>
        <dbReference type="EC" id="4.6.1.18"/>
    </reaction>
</comment>
<comment type="catalytic activity">
    <reaction>
        <text>an [RNA] containing uridine + H2O = an [RNA]-3'-uridine-3'-phosphate + a 5'-hydroxy-ribonucleotide-3'-[RNA].</text>
        <dbReference type="EC" id="4.6.1.18"/>
    </reaction>
</comment>
<comment type="subunit">
    <text evidence="1">Monomer. Interacts with and forms tight 1:1 complexes with RNH1. Dimerization of two such complexes may occur. Interaction with RNH1 inhibits this protein (By similarity).</text>
</comment>
<comment type="subcellular location">
    <subcellularLocation>
        <location>Secreted</location>
    </subcellularLocation>
</comment>
<comment type="tissue specificity">
    <text>Pancreas.</text>
</comment>
<comment type="similarity">
    <text evidence="3">Belongs to the pancreatic ribonuclease family.</text>
</comment>